<sequence length="250" mass="28427">MSDLTSTILFEHPLNEKMRTWLRMEFLLQQLESHRSLDNIANALTFFRTASDLIDVLERGEVRTDLLKELERQQQKLQQWADIPGVDVSLVDSLRNQLKSRAAVLMSAPRIGQSLKEDRLISVVRQRLSIPGGCCSFDLPTLHVWLHQPSEQRDQHINKLLASLAPLHQSLTIILDLIRQSCPLRSQISLNGFFQDNAGGADLLRLRLPLDPQLYPQISGHKTRYAIRFLALDSENGTVPARLSFELACC</sequence>
<protein>
    <recommendedName>
        <fullName evidence="1">Cell division protein ZapD</fullName>
    </recommendedName>
    <alternativeName>
        <fullName evidence="1">Z ring-associated protein D</fullName>
    </alternativeName>
</protein>
<accession>B1JK67</accession>
<proteinExistence type="inferred from homology"/>
<evidence type="ECO:0000255" key="1">
    <source>
        <dbReference type="HAMAP-Rule" id="MF_01092"/>
    </source>
</evidence>
<name>ZAPD_YERPY</name>
<gene>
    <name evidence="1" type="primary">zapD</name>
    <name type="ordered locus">YPK_3504</name>
</gene>
<keyword id="KW-0131">Cell cycle</keyword>
<keyword id="KW-0132">Cell division</keyword>
<keyword id="KW-0963">Cytoplasm</keyword>
<keyword id="KW-0717">Septation</keyword>
<reference key="1">
    <citation type="submission" date="2008-02" db="EMBL/GenBank/DDBJ databases">
        <title>Complete sequence of Yersinia pseudotuberculosis YPIII.</title>
        <authorList>
            <consortium name="US DOE Joint Genome Institute"/>
            <person name="Copeland A."/>
            <person name="Lucas S."/>
            <person name="Lapidus A."/>
            <person name="Glavina del Rio T."/>
            <person name="Dalin E."/>
            <person name="Tice H."/>
            <person name="Bruce D."/>
            <person name="Goodwin L."/>
            <person name="Pitluck S."/>
            <person name="Munk A.C."/>
            <person name="Brettin T."/>
            <person name="Detter J.C."/>
            <person name="Han C."/>
            <person name="Tapia R."/>
            <person name="Schmutz J."/>
            <person name="Larimer F."/>
            <person name="Land M."/>
            <person name="Hauser L."/>
            <person name="Challacombe J.F."/>
            <person name="Green L."/>
            <person name="Lindler L.E."/>
            <person name="Nikolich M.P."/>
            <person name="Richardson P."/>
        </authorList>
    </citation>
    <scope>NUCLEOTIDE SEQUENCE [LARGE SCALE GENOMIC DNA]</scope>
    <source>
        <strain>YPIII</strain>
    </source>
</reference>
<feature type="chain" id="PRO_1000136959" description="Cell division protein ZapD">
    <location>
        <begin position="1"/>
        <end position="250"/>
    </location>
</feature>
<comment type="function">
    <text evidence="1">Cell division factor that enhances FtsZ-ring assembly. Directly interacts with FtsZ and promotes bundling of FtsZ protofilaments, with a reduction in FtsZ GTPase activity.</text>
</comment>
<comment type="subunit">
    <text evidence="1">Interacts with FtsZ.</text>
</comment>
<comment type="subcellular location">
    <subcellularLocation>
        <location evidence="1">Cytoplasm</location>
    </subcellularLocation>
    <text evidence="1">Localizes to mid-cell in an FtsZ-dependent manner.</text>
</comment>
<comment type="similarity">
    <text evidence="1">Belongs to the ZapD family.</text>
</comment>
<dbReference type="EMBL" id="CP000950">
    <property type="protein sequence ID" value="ACA69771.1"/>
    <property type="molecule type" value="Genomic_DNA"/>
</dbReference>
<dbReference type="RefSeq" id="WP_002209318.1">
    <property type="nucleotide sequence ID" value="NZ_CP009792.1"/>
</dbReference>
<dbReference type="SMR" id="B1JK67"/>
<dbReference type="GeneID" id="57975279"/>
<dbReference type="KEGG" id="ypy:YPK_3504"/>
<dbReference type="PATRIC" id="fig|502800.11.peg.4247"/>
<dbReference type="GO" id="GO:0032153">
    <property type="term" value="C:cell division site"/>
    <property type="evidence" value="ECO:0007669"/>
    <property type="project" value="TreeGrafter"/>
</dbReference>
<dbReference type="GO" id="GO:0005737">
    <property type="term" value="C:cytoplasm"/>
    <property type="evidence" value="ECO:0007669"/>
    <property type="project" value="UniProtKB-SubCell"/>
</dbReference>
<dbReference type="GO" id="GO:0000917">
    <property type="term" value="P:division septum assembly"/>
    <property type="evidence" value="ECO:0007669"/>
    <property type="project" value="UniProtKB-KW"/>
</dbReference>
<dbReference type="GO" id="GO:0043093">
    <property type="term" value="P:FtsZ-dependent cytokinesis"/>
    <property type="evidence" value="ECO:0007669"/>
    <property type="project" value="UniProtKB-UniRule"/>
</dbReference>
<dbReference type="FunFam" id="1.10.3900.10:FF:000001">
    <property type="entry name" value="Cell division protein ZapD"/>
    <property type="match status" value="1"/>
</dbReference>
<dbReference type="FunFam" id="2.60.440.10:FF:000001">
    <property type="entry name" value="Cell division protein ZapD"/>
    <property type="match status" value="1"/>
</dbReference>
<dbReference type="Gene3D" id="1.10.3900.10">
    <property type="entry name" value="YacF-like"/>
    <property type="match status" value="1"/>
</dbReference>
<dbReference type="Gene3D" id="2.60.440.10">
    <property type="entry name" value="YacF-like domains"/>
    <property type="match status" value="1"/>
</dbReference>
<dbReference type="HAMAP" id="MF_01092">
    <property type="entry name" value="ZapD"/>
    <property type="match status" value="1"/>
</dbReference>
<dbReference type="InterPro" id="IPR009777">
    <property type="entry name" value="ZapD"/>
</dbReference>
<dbReference type="InterPro" id="IPR027462">
    <property type="entry name" value="ZapD_C"/>
</dbReference>
<dbReference type="InterPro" id="IPR036268">
    <property type="entry name" value="ZapD_sf"/>
</dbReference>
<dbReference type="NCBIfam" id="NF003653">
    <property type="entry name" value="PRK05287.1-1"/>
    <property type="match status" value="1"/>
</dbReference>
<dbReference type="NCBIfam" id="NF003655">
    <property type="entry name" value="PRK05287.1-3"/>
    <property type="match status" value="1"/>
</dbReference>
<dbReference type="PANTHER" id="PTHR39455">
    <property type="entry name" value="CELL DIVISION PROTEIN ZAPD"/>
    <property type="match status" value="1"/>
</dbReference>
<dbReference type="PANTHER" id="PTHR39455:SF1">
    <property type="entry name" value="CELL DIVISION PROTEIN ZAPD"/>
    <property type="match status" value="1"/>
</dbReference>
<dbReference type="Pfam" id="PF07072">
    <property type="entry name" value="ZapD"/>
    <property type="match status" value="1"/>
</dbReference>
<dbReference type="SUPFAM" id="SSF160950">
    <property type="entry name" value="YacF-like"/>
    <property type="match status" value="1"/>
</dbReference>
<organism>
    <name type="scientific">Yersinia pseudotuberculosis serotype O:3 (strain YPIII)</name>
    <dbReference type="NCBI Taxonomy" id="502800"/>
    <lineage>
        <taxon>Bacteria</taxon>
        <taxon>Pseudomonadati</taxon>
        <taxon>Pseudomonadota</taxon>
        <taxon>Gammaproteobacteria</taxon>
        <taxon>Enterobacterales</taxon>
        <taxon>Yersiniaceae</taxon>
        <taxon>Yersinia</taxon>
    </lineage>
</organism>